<gene>
    <name evidence="1" type="primary">ruvC</name>
    <name type="ordered locus">Gura_1415</name>
</gene>
<comment type="function">
    <text evidence="1">The RuvA-RuvB-RuvC complex processes Holliday junction (HJ) DNA during genetic recombination and DNA repair. Endonuclease that resolves HJ intermediates. Cleaves cruciform DNA by making single-stranded nicks across the HJ at symmetrical positions within the homologous arms, yielding a 5'-phosphate and a 3'-hydroxyl group; requires a central core of homology in the junction. The consensus cleavage sequence is 5'-(A/T)TT(C/G)-3'. Cleavage occurs on the 3'-side of the TT dinucleotide at the point of strand exchange. HJ branch migration catalyzed by RuvA-RuvB allows RuvC to scan DNA until it finds its consensus sequence, where it cleaves and resolves the cruciform DNA.</text>
</comment>
<comment type="catalytic activity">
    <reaction evidence="1">
        <text>Endonucleolytic cleavage at a junction such as a reciprocal single-stranded crossover between two homologous DNA duplexes (Holliday junction).</text>
        <dbReference type="EC" id="3.1.21.10"/>
    </reaction>
</comment>
<comment type="cofactor">
    <cofactor evidence="1">
        <name>Mg(2+)</name>
        <dbReference type="ChEBI" id="CHEBI:18420"/>
    </cofactor>
    <text evidence="1">Binds 2 Mg(2+) ion per subunit.</text>
</comment>
<comment type="subunit">
    <text evidence="1">Homodimer which binds Holliday junction (HJ) DNA. The HJ becomes 2-fold symmetrical on binding to RuvC with unstacked arms; it has a different conformation from HJ DNA in complex with RuvA. In the full resolvosome a probable DNA-RuvA(4)-RuvB(12)-RuvC(2) complex forms which resolves the HJ.</text>
</comment>
<comment type="subcellular location">
    <subcellularLocation>
        <location evidence="1">Cytoplasm</location>
    </subcellularLocation>
</comment>
<comment type="similarity">
    <text evidence="1">Belongs to the RuvC family.</text>
</comment>
<accession>A5G9Y4</accession>
<name>RUVC_GEOUR</name>
<evidence type="ECO:0000255" key="1">
    <source>
        <dbReference type="HAMAP-Rule" id="MF_00034"/>
    </source>
</evidence>
<feature type="chain" id="PRO_1000074488" description="Crossover junction endodeoxyribonuclease RuvC">
    <location>
        <begin position="1"/>
        <end position="171"/>
    </location>
</feature>
<feature type="active site" evidence="1">
    <location>
        <position position="7"/>
    </location>
</feature>
<feature type="active site" evidence="1">
    <location>
        <position position="67"/>
    </location>
</feature>
<feature type="active site" evidence="1">
    <location>
        <position position="139"/>
    </location>
</feature>
<feature type="binding site" evidence="1">
    <location>
        <position position="7"/>
    </location>
    <ligand>
        <name>Mg(2+)</name>
        <dbReference type="ChEBI" id="CHEBI:18420"/>
        <label>1</label>
    </ligand>
</feature>
<feature type="binding site" evidence="1">
    <location>
        <position position="67"/>
    </location>
    <ligand>
        <name>Mg(2+)</name>
        <dbReference type="ChEBI" id="CHEBI:18420"/>
        <label>2</label>
    </ligand>
</feature>
<feature type="binding site" evidence="1">
    <location>
        <position position="139"/>
    </location>
    <ligand>
        <name>Mg(2+)</name>
        <dbReference type="ChEBI" id="CHEBI:18420"/>
        <label>1</label>
    </ligand>
</feature>
<organism>
    <name type="scientific">Geotalea uraniireducens (strain Rf4)</name>
    <name type="common">Geobacter uraniireducens</name>
    <dbReference type="NCBI Taxonomy" id="351605"/>
    <lineage>
        <taxon>Bacteria</taxon>
        <taxon>Pseudomonadati</taxon>
        <taxon>Thermodesulfobacteriota</taxon>
        <taxon>Desulfuromonadia</taxon>
        <taxon>Geobacterales</taxon>
        <taxon>Geobacteraceae</taxon>
        <taxon>Geotalea</taxon>
    </lineage>
</organism>
<keyword id="KW-0963">Cytoplasm</keyword>
<keyword id="KW-0227">DNA damage</keyword>
<keyword id="KW-0233">DNA recombination</keyword>
<keyword id="KW-0234">DNA repair</keyword>
<keyword id="KW-0238">DNA-binding</keyword>
<keyword id="KW-0255">Endonuclease</keyword>
<keyword id="KW-0378">Hydrolase</keyword>
<keyword id="KW-0460">Magnesium</keyword>
<keyword id="KW-0479">Metal-binding</keyword>
<keyword id="KW-0540">Nuclease</keyword>
<keyword id="KW-1185">Reference proteome</keyword>
<dbReference type="EC" id="3.1.21.10" evidence="1"/>
<dbReference type="EMBL" id="CP000698">
    <property type="protein sequence ID" value="ABQ25616.1"/>
    <property type="molecule type" value="Genomic_DNA"/>
</dbReference>
<dbReference type="RefSeq" id="WP_011938332.1">
    <property type="nucleotide sequence ID" value="NC_009483.1"/>
</dbReference>
<dbReference type="SMR" id="A5G9Y4"/>
<dbReference type="STRING" id="351605.Gura_1415"/>
<dbReference type="KEGG" id="gur:Gura_1415"/>
<dbReference type="HOGENOM" id="CLU_091257_3_1_7"/>
<dbReference type="OrthoDB" id="9805499at2"/>
<dbReference type="Proteomes" id="UP000006695">
    <property type="component" value="Chromosome"/>
</dbReference>
<dbReference type="GO" id="GO:0005737">
    <property type="term" value="C:cytoplasm"/>
    <property type="evidence" value="ECO:0007669"/>
    <property type="project" value="UniProtKB-SubCell"/>
</dbReference>
<dbReference type="GO" id="GO:0048476">
    <property type="term" value="C:Holliday junction resolvase complex"/>
    <property type="evidence" value="ECO:0007669"/>
    <property type="project" value="UniProtKB-UniRule"/>
</dbReference>
<dbReference type="GO" id="GO:0008821">
    <property type="term" value="F:crossover junction DNA endonuclease activity"/>
    <property type="evidence" value="ECO:0007669"/>
    <property type="project" value="UniProtKB-UniRule"/>
</dbReference>
<dbReference type="GO" id="GO:0003677">
    <property type="term" value="F:DNA binding"/>
    <property type="evidence" value="ECO:0007669"/>
    <property type="project" value="UniProtKB-KW"/>
</dbReference>
<dbReference type="GO" id="GO:0000287">
    <property type="term" value="F:magnesium ion binding"/>
    <property type="evidence" value="ECO:0007669"/>
    <property type="project" value="UniProtKB-UniRule"/>
</dbReference>
<dbReference type="GO" id="GO:0006310">
    <property type="term" value="P:DNA recombination"/>
    <property type="evidence" value="ECO:0007669"/>
    <property type="project" value="UniProtKB-UniRule"/>
</dbReference>
<dbReference type="GO" id="GO:0006281">
    <property type="term" value="P:DNA repair"/>
    <property type="evidence" value="ECO:0007669"/>
    <property type="project" value="UniProtKB-UniRule"/>
</dbReference>
<dbReference type="CDD" id="cd16962">
    <property type="entry name" value="RuvC"/>
    <property type="match status" value="1"/>
</dbReference>
<dbReference type="FunFam" id="3.30.420.10:FF:000002">
    <property type="entry name" value="Crossover junction endodeoxyribonuclease RuvC"/>
    <property type="match status" value="1"/>
</dbReference>
<dbReference type="Gene3D" id="3.30.420.10">
    <property type="entry name" value="Ribonuclease H-like superfamily/Ribonuclease H"/>
    <property type="match status" value="1"/>
</dbReference>
<dbReference type="HAMAP" id="MF_00034">
    <property type="entry name" value="RuvC"/>
    <property type="match status" value="1"/>
</dbReference>
<dbReference type="InterPro" id="IPR012337">
    <property type="entry name" value="RNaseH-like_sf"/>
</dbReference>
<dbReference type="InterPro" id="IPR036397">
    <property type="entry name" value="RNaseH_sf"/>
</dbReference>
<dbReference type="InterPro" id="IPR020563">
    <property type="entry name" value="X-over_junc_endoDNase_Mg_BS"/>
</dbReference>
<dbReference type="InterPro" id="IPR002176">
    <property type="entry name" value="X-over_junc_endoDNase_RuvC"/>
</dbReference>
<dbReference type="NCBIfam" id="NF000711">
    <property type="entry name" value="PRK00039.2-1"/>
    <property type="match status" value="1"/>
</dbReference>
<dbReference type="NCBIfam" id="TIGR00228">
    <property type="entry name" value="ruvC"/>
    <property type="match status" value="1"/>
</dbReference>
<dbReference type="PANTHER" id="PTHR30194">
    <property type="entry name" value="CROSSOVER JUNCTION ENDODEOXYRIBONUCLEASE RUVC"/>
    <property type="match status" value="1"/>
</dbReference>
<dbReference type="PANTHER" id="PTHR30194:SF3">
    <property type="entry name" value="CROSSOVER JUNCTION ENDODEOXYRIBONUCLEASE RUVC"/>
    <property type="match status" value="1"/>
</dbReference>
<dbReference type="Pfam" id="PF02075">
    <property type="entry name" value="RuvC"/>
    <property type="match status" value="1"/>
</dbReference>
<dbReference type="PRINTS" id="PR00696">
    <property type="entry name" value="RSOLVASERUVC"/>
</dbReference>
<dbReference type="SUPFAM" id="SSF53098">
    <property type="entry name" value="Ribonuclease H-like"/>
    <property type="match status" value="1"/>
</dbReference>
<dbReference type="PROSITE" id="PS01321">
    <property type="entry name" value="RUVC"/>
    <property type="match status" value="1"/>
</dbReference>
<sequence>MKILGIDPGSRITGYGVISKEGNRLIHVDNGAIFTDKAKDFPARLERIYRGLAEIIETYRPDAVAVENIFFSNNVQSALKLGQARGAAIVAGVIAGLPVFEYTALQVKQAVVGNGKAAKQQVQQMIKVLLNLPEIAQEDASDALAVAVCHANSSVLSGMLKIMDKVGKTNA</sequence>
<proteinExistence type="inferred from homology"/>
<protein>
    <recommendedName>
        <fullName evidence="1">Crossover junction endodeoxyribonuclease RuvC</fullName>
        <ecNumber evidence="1">3.1.21.10</ecNumber>
    </recommendedName>
    <alternativeName>
        <fullName evidence="1">Holliday junction nuclease RuvC</fullName>
    </alternativeName>
    <alternativeName>
        <fullName evidence="1">Holliday junction resolvase RuvC</fullName>
    </alternativeName>
</protein>
<reference key="1">
    <citation type="submission" date="2007-05" db="EMBL/GenBank/DDBJ databases">
        <title>Complete sequence of Geobacter uraniireducens Rf4.</title>
        <authorList>
            <consortium name="US DOE Joint Genome Institute"/>
            <person name="Copeland A."/>
            <person name="Lucas S."/>
            <person name="Lapidus A."/>
            <person name="Barry K."/>
            <person name="Detter J.C."/>
            <person name="Glavina del Rio T."/>
            <person name="Hammon N."/>
            <person name="Israni S."/>
            <person name="Dalin E."/>
            <person name="Tice H."/>
            <person name="Pitluck S."/>
            <person name="Chertkov O."/>
            <person name="Brettin T."/>
            <person name="Bruce D."/>
            <person name="Han C."/>
            <person name="Schmutz J."/>
            <person name="Larimer F."/>
            <person name="Land M."/>
            <person name="Hauser L."/>
            <person name="Kyrpides N."/>
            <person name="Mikhailova N."/>
            <person name="Shelobolina E."/>
            <person name="Aklujkar M."/>
            <person name="Lovley D."/>
            <person name="Richardson P."/>
        </authorList>
    </citation>
    <scope>NUCLEOTIDE SEQUENCE [LARGE SCALE GENOMIC DNA]</scope>
    <source>
        <strain>ATCC BAA-1134 / JCM 13001 / Rf4</strain>
    </source>
</reference>